<comment type="function">
    <text evidence="2">E2 component of the 2-oxoglutarate dehydrogenase (OGDH) complex which catalyzes the second step in the conversion of 2-oxoglutarate to succinyl-CoA and CO(2).</text>
</comment>
<comment type="catalytic activity">
    <reaction evidence="2">
        <text>N(6)-[(R)-dihydrolipoyl]-L-lysyl-[protein] + succinyl-CoA = N(6)-[(R)-S(8)-succinyldihydrolipoyl]-L-lysyl-[protein] + CoA</text>
        <dbReference type="Rhea" id="RHEA:15213"/>
        <dbReference type="Rhea" id="RHEA-COMP:10475"/>
        <dbReference type="Rhea" id="RHEA-COMP:20092"/>
        <dbReference type="ChEBI" id="CHEBI:57287"/>
        <dbReference type="ChEBI" id="CHEBI:57292"/>
        <dbReference type="ChEBI" id="CHEBI:83100"/>
        <dbReference type="ChEBI" id="CHEBI:83120"/>
        <dbReference type="EC" id="2.3.1.61"/>
    </reaction>
</comment>
<comment type="cofactor">
    <cofactor evidence="1">
        <name>(R)-lipoate</name>
        <dbReference type="ChEBI" id="CHEBI:83088"/>
    </cofactor>
    <text evidence="1">Binds 1 lipoyl cofactor covalently.</text>
</comment>
<comment type="pathway">
    <text>Amino-acid degradation; L-lysine degradation via saccharopine pathway; glutaryl-CoA from L-lysine: step 6/6.</text>
</comment>
<comment type="subunit">
    <text evidence="2">Forms a 24-polypeptide structural core with octahedral symmetry. Part of the 2-oxoglutarate dehydrogenase (OGDH) complex composed of E1 (2-oxoglutarate dehydrogenase), E2 (dihydrolipoamide succinyltransferase) and E3 (dihydrolipoamide dehydrogenase); the complex contains multiple copies of the three enzymatic components (E1, E2 and E3).</text>
</comment>
<comment type="similarity">
    <text evidence="5">Belongs to the 2-oxoacid dehydrogenase family.</text>
</comment>
<organism>
    <name type="scientific">Rickettsia felis (strain ATCC VR-1525 / URRWXCal2)</name>
    <name type="common">Rickettsia azadi</name>
    <dbReference type="NCBI Taxonomy" id="315456"/>
    <lineage>
        <taxon>Bacteria</taxon>
        <taxon>Pseudomonadati</taxon>
        <taxon>Pseudomonadota</taxon>
        <taxon>Alphaproteobacteria</taxon>
        <taxon>Rickettsiales</taxon>
        <taxon>Rickettsiaceae</taxon>
        <taxon>Rickettsieae</taxon>
        <taxon>Rickettsia</taxon>
        <taxon>spotted fever group</taxon>
    </lineage>
</organism>
<proteinExistence type="inferred from homology"/>
<reference key="1">
    <citation type="journal article" date="2005" name="PLoS Biol.">
        <title>The genome sequence of Rickettsia felis identifies the first putative conjugative plasmid in an obligate intracellular parasite.</title>
        <authorList>
            <person name="Ogata H."/>
            <person name="Renesto P."/>
            <person name="Audic S."/>
            <person name="Robert C."/>
            <person name="Blanc G."/>
            <person name="Fournier P.-E."/>
            <person name="Parinello H."/>
            <person name="Claverie J.-M."/>
            <person name="Raoult D."/>
        </authorList>
    </citation>
    <scope>NUCLEOTIDE SEQUENCE [LARGE SCALE GENOMIC DNA]</scope>
    <source>
        <strain>ATCC VR-1525 / URRWXCal2</strain>
    </source>
</reference>
<keyword id="KW-0012">Acyltransferase</keyword>
<keyword id="KW-0450">Lipoyl</keyword>
<keyword id="KW-0808">Transferase</keyword>
<keyword id="KW-0816">Tricarboxylic acid cycle</keyword>
<protein>
    <recommendedName>
        <fullName>Dihydrolipoyllysine-residue succinyltransferase component of 2-oxoglutarate dehydrogenase complex</fullName>
        <ecNumber evidence="2">2.3.1.61</ecNumber>
    </recommendedName>
    <alternativeName>
        <fullName>2-oxoglutarate dehydrogenase complex component E2</fullName>
        <shortName>OGDC-E2</shortName>
    </alternativeName>
    <alternativeName>
        <fullName>Dihydrolipoamide succinyltransferase component of 2-oxoglutarate dehydrogenase complex</fullName>
    </alternativeName>
</protein>
<name>ODO2_RICFE</name>
<feature type="chain" id="PRO_0000288096" description="Dihydrolipoyllysine-residue succinyltransferase component of 2-oxoglutarate dehydrogenase complex">
    <location>
        <begin position="1"/>
        <end position="401"/>
    </location>
</feature>
<feature type="domain" description="Lipoyl-binding" evidence="3">
    <location>
        <begin position="2"/>
        <end position="77"/>
    </location>
</feature>
<feature type="domain" description="Peripheral subunit-binding (PSBD)" evidence="4">
    <location>
        <begin position="115"/>
        <end position="152"/>
    </location>
</feature>
<feature type="active site" evidence="2">
    <location>
        <position position="372"/>
    </location>
</feature>
<feature type="active site" evidence="2">
    <location>
        <position position="376"/>
    </location>
</feature>
<feature type="modified residue" description="N6-lipoyllysine" evidence="3">
    <location>
        <position position="43"/>
    </location>
</feature>
<gene>
    <name type="primary">sucB</name>
    <name type="ordered locus">RF_1093</name>
</gene>
<accession>Q4UKI7</accession>
<dbReference type="EC" id="2.3.1.61" evidence="2"/>
<dbReference type="EMBL" id="CP000053">
    <property type="protein sequence ID" value="AAY61944.1"/>
    <property type="molecule type" value="Genomic_DNA"/>
</dbReference>
<dbReference type="SMR" id="Q4UKI7"/>
<dbReference type="STRING" id="315456.RF_1093"/>
<dbReference type="KEGG" id="rfe:RF_1093"/>
<dbReference type="eggNOG" id="COG0508">
    <property type="taxonomic scope" value="Bacteria"/>
</dbReference>
<dbReference type="HOGENOM" id="CLU_016733_0_0_5"/>
<dbReference type="OrthoDB" id="9805770at2"/>
<dbReference type="UniPathway" id="UPA00868">
    <property type="reaction ID" value="UER00840"/>
</dbReference>
<dbReference type="Proteomes" id="UP000008548">
    <property type="component" value="Chromosome"/>
</dbReference>
<dbReference type="GO" id="GO:0005829">
    <property type="term" value="C:cytosol"/>
    <property type="evidence" value="ECO:0007669"/>
    <property type="project" value="TreeGrafter"/>
</dbReference>
<dbReference type="GO" id="GO:0045252">
    <property type="term" value="C:oxoglutarate dehydrogenase complex"/>
    <property type="evidence" value="ECO:0007669"/>
    <property type="project" value="InterPro"/>
</dbReference>
<dbReference type="GO" id="GO:0004149">
    <property type="term" value="F:dihydrolipoyllysine-residue succinyltransferase activity"/>
    <property type="evidence" value="ECO:0007669"/>
    <property type="project" value="UniProtKB-EC"/>
</dbReference>
<dbReference type="GO" id="GO:0033512">
    <property type="term" value="P:L-lysine catabolic process to acetyl-CoA via saccharopine"/>
    <property type="evidence" value="ECO:0007669"/>
    <property type="project" value="UniProtKB-UniPathway"/>
</dbReference>
<dbReference type="GO" id="GO:0006099">
    <property type="term" value="P:tricarboxylic acid cycle"/>
    <property type="evidence" value="ECO:0007669"/>
    <property type="project" value="UniProtKB-KW"/>
</dbReference>
<dbReference type="CDD" id="cd06849">
    <property type="entry name" value="lipoyl_domain"/>
    <property type="match status" value="1"/>
</dbReference>
<dbReference type="FunFam" id="3.30.559.10:FF:000007">
    <property type="entry name" value="Dihydrolipoamide acetyltransferase component of pyruvate dehydrogenase complex"/>
    <property type="match status" value="1"/>
</dbReference>
<dbReference type="Gene3D" id="2.40.50.100">
    <property type="match status" value="1"/>
</dbReference>
<dbReference type="Gene3D" id="3.30.559.10">
    <property type="entry name" value="Chloramphenicol acetyltransferase-like domain"/>
    <property type="match status" value="1"/>
</dbReference>
<dbReference type="Gene3D" id="4.10.320.10">
    <property type="entry name" value="E3-binding domain"/>
    <property type="match status" value="1"/>
</dbReference>
<dbReference type="InterPro" id="IPR003016">
    <property type="entry name" value="2-oxoA_DH_lipoyl-BS"/>
</dbReference>
<dbReference type="InterPro" id="IPR050537">
    <property type="entry name" value="2-oxoacid_dehydrogenase"/>
</dbReference>
<dbReference type="InterPro" id="IPR001078">
    <property type="entry name" value="2-oxoacid_DH_actylTfrase"/>
</dbReference>
<dbReference type="InterPro" id="IPR000089">
    <property type="entry name" value="Biotin_lipoyl"/>
</dbReference>
<dbReference type="InterPro" id="IPR023213">
    <property type="entry name" value="CAT-like_dom_sf"/>
</dbReference>
<dbReference type="InterPro" id="IPR036625">
    <property type="entry name" value="E3-bd_dom_sf"/>
</dbReference>
<dbReference type="InterPro" id="IPR004167">
    <property type="entry name" value="PSBD"/>
</dbReference>
<dbReference type="InterPro" id="IPR011053">
    <property type="entry name" value="Single_hybrid_motif"/>
</dbReference>
<dbReference type="InterPro" id="IPR006255">
    <property type="entry name" value="SucB"/>
</dbReference>
<dbReference type="NCBIfam" id="NF004309">
    <property type="entry name" value="PRK05704.1"/>
    <property type="match status" value="1"/>
</dbReference>
<dbReference type="NCBIfam" id="TIGR01347">
    <property type="entry name" value="sucB"/>
    <property type="match status" value="1"/>
</dbReference>
<dbReference type="PANTHER" id="PTHR43416:SF5">
    <property type="entry name" value="DIHYDROLIPOYLLYSINE-RESIDUE SUCCINYLTRANSFERASE COMPONENT OF 2-OXOGLUTARATE DEHYDROGENASE COMPLEX, MITOCHONDRIAL"/>
    <property type="match status" value="1"/>
</dbReference>
<dbReference type="PANTHER" id="PTHR43416">
    <property type="entry name" value="DIHYDROLIPOYLLYSINE-RESIDUE SUCCINYLTRANSFERASE COMPONENT OF 2-OXOGLUTARATE DEHYDROGENASE COMPLEX, MITOCHONDRIAL-RELATED"/>
    <property type="match status" value="1"/>
</dbReference>
<dbReference type="Pfam" id="PF00198">
    <property type="entry name" value="2-oxoacid_dh"/>
    <property type="match status" value="1"/>
</dbReference>
<dbReference type="Pfam" id="PF00364">
    <property type="entry name" value="Biotin_lipoyl"/>
    <property type="match status" value="1"/>
</dbReference>
<dbReference type="Pfam" id="PF02817">
    <property type="entry name" value="E3_binding"/>
    <property type="match status" value="1"/>
</dbReference>
<dbReference type="SUPFAM" id="SSF52777">
    <property type="entry name" value="CoA-dependent acyltransferases"/>
    <property type="match status" value="1"/>
</dbReference>
<dbReference type="SUPFAM" id="SSF47005">
    <property type="entry name" value="Peripheral subunit-binding domain of 2-oxo acid dehydrogenase complex"/>
    <property type="match status" value="1"/>
</dbReference>
<dbReference type="SUPFAM" id="SSF51230">
    <property type="entry name" value="Single hybrid motif"/>
    <property type="match status" value="1"/>
</dbReference>
<dbReference type="PROSITE" id="PS50968">
    <property type="entry name" value="BIOTINYL_LIPOYL"/>
    <property type="match status" value="1"/>
</dbReference>
<dbReference type="PROSITE" id="PS00189">
    <property type="entry name" value="LIPOYL"/>
    <property type="match status" value="1"/>
</dbReference>
<dbReference type="PROSITE" id="PS51826">
    <property type="entry name" value="PSBD"/>
    <property type="match status" value="1"/>
</dbReference>
<evidence type="ECO:0000250" key="1"/>
<evidence type="ECO:0000250" key="2">
    <source>
        <dbReference type="UniProtKB" id="P0AFG6"/>
    </source>
</evidence>
<evidence type="ECO:0000255" key="3">
    <source>
        <dbReference type="PROSITE-ProRule" id="PRU01066"/>
    </source>
</evidence>
<evidence type="ECO:0000255" key="4">
    <source>
        <dbReference type="PROSITE-ProRule" id="PRU01170"/>
    </source>
</evidence>
<evidence type="ECO:0000305" key="5"/>
<sequence length="401" mass="43461">MSVKIIVPSLGESVTEATIAKWYKKEGDPVKTDELLLEIETEKVTLEVNAPCDGTIGKISKTDGANVAVGEEIGEINEGAAANTAGTNNESAKAQAVTQPTSEKPVEKPAVVNNILAPSVQKLVTENKLDPNNIKGTGRDGRITKGDVLETINTPSAATSTPTVNKTNEERVQRVRMSRLRKTIAQRLKDSQNTAAILTTFNEIDMSKVIALRNQYKEEFEKKHLVKLGFMSFFVKATIEALKLIPSVNAEIDGDDLVYKNYYDIGVAVGTEQGLVVPVVRDADKMGFAEVEKAIGTLAKKAREGKLSMADLSGGTFSISNGGVYGSLLSTPIINPPQSGILGLHKTEERAVVIDGKIEIRPMMYIALSYDHRIIDGKEGVSFLVKIKELIENPEKLLLNL</sequence>